<keyword id="KW-0067">ATP-binding</keyword>
<keyword id="KW-0436">Ligase</keyword>
<keyword id="KW-0547">Nucleotide-binding</keyword>
<keyword id="KW-0648">Protein biosynthesis</keyword>
<keyword id="KW-1185">Reference proteome</keyword>
<dbReference type="EC" id="6.3.5.7" evidence="1"/>
<dbReference type="EMBL" id="CP000097">
    <property type="protein sequence ID" value="ABB26266.1"/>
    <property type="molecule type" value="Genomic_DNA"/>
</dbReference>
<dbReference type="RefSeq" id="WP_011360091.1">
    <property type="nucleotide sequence ID" value="NC_007513.1"/>
</dbReference>
<dbReference type="SMR" id="Q3AVK4"/>
<dbReference type="STRING" id="316279.Syncc9902_1302"/>
<dbReference type="KEGG" id="sye:Syncc9902_1302"/>
<dbReference type="eggNOG" id="COG0154">
    <property type="taxonomic scope" value="Bacteria"/>
</dbReference>
<dbReference type="HOGENOM" id="CLU_009600_0_3_3"/>
<dbReference type="OrthoDB" id="9811471at2"/>
<dbReference type="Proteomes" id="UP000002712">
    <property type="component" value="Chromosome"/>
</dbReference>
<dbReference type="GO" id="GO:0030956">
    <property type="term" value="C:glutamyl-tRNA(Gln) amidotransferase complex"/>
    <property type="evidence" value="ECO:0007669"/>
    <property type="project" value="InterPro"/>
</dbReference>
<dbReference type="GO" id="GO:0005524">
    <property type="term" value="F:ATP binding"/>
    <property type="evidence" value="ECO:0007669"/>
    <property type="project" value="UniProtKB-KW"/>
</dbReference>
<dbReference type="GO" id="GO:0050567">
    <property type="term" value="F:glutaminyl-tRNA synthase (glutamine-hydrolyzing) activity"/>
    <property type="evidence" value="ECO:0007669"/>
    <property type="project" value="UniProtKB-UniRule"/>
</dbReference>
<dbReference type="GO" id="GO:0006412">
    <property type="term" value="P:translation"/>
    <property type="evidence" value="ECO:0007669"/>
    <property type="project" value="UniProtKB-UniRule"/>
</dbReference>
<dbReference type="Gene3D" id="3.90.1300.10">
    <property type="entry name" value="Amidase signature (AS) domain"/>
    <property type="match status" value="1"/>
</dbReference>
<dbReference type="HAMAP" id="MF_00120">
    <property type="entry name" value="GatA"/>
    <property type="match status" value="1"/>
</dbReference>
<dbReference type="InterPro" id="IPR000120">
    <property type="entry name" value="Amidase"/>
</dbReference>
<dbReference type="InterPro" id="IPR020556">
    <property type="entry name" value="Amidase_CS"/>
</dbReference>
<dbReference type="InterPro" id="IPR023631">
    <property type="entry name" value="Amidase_dom"/>
</dbReference>
<dbReference type="InterPro" id="IPR036928">
    <property type="entry name" value="AS_sf"/>
</dbReference>
<dbReference type="InterPro" id="IPR004412">
    <property type="entry name" value="GatA"/>
</dbReference>
<dbReference type="NCBIfam" id="TIGR00132">
    <property type="entry name" value="gatA"/>
    <property type="match status" value="1"/>
</dbReference>
<dbReference type="PANTHER" id="PTHR11895:SF151">
    <property type="entry name" value="GLUTAMYL-TRNA(GLN) AMIDOTRANSFERASE SUBUNIT A"/>
    <property type="match status" value="1"/>
</dbReference>
<dbReference type="PANTHER" id="PTHR11895">
    <property type="entry name" value="TRANSAMIDASE"/>
    <property type="match status" value="1"/>
</dbReference>
<dbReference type="Pfam" id="PF01425">
    <property type="entry name" value="Amidase"/>
    <property type="match status" value="1"/>
</dbReference>
<dbReference type="PIRSF" id="PIRSF001221">
    <property type="entry name" value="Amidase_fungi"/>
    <property type="match status" value="1"/>
</dbReference>
<dbReference type="SUPFAM" id="SSF75304">
    <property type="entry name" value="Amidase signature (AS) enzymes"/>
    <property type="match status" value="1"/>
</dbReference>
<dbReference type="PROSITE" id="PS00571">
    <property type="entry name" value="AMIDASES"/>
    <property type="match status" value="1"/>
</dbReference>
<accession>Q3AVK4</accession>
<feature type="chain" id="PRO_0000241168" description="Glutamyl-tRNA(Gln) amidotransferase subunit A">
    <location>
        <begin position="1"/>
        <end position="491"/>
    </location>
</feature>
<feature type="active site" description="Charge relay system" evidence="1">
    <location>
        <position position="79"/>
    </location>
</feature>
<feature type="active site" description="Charge relay system" evidence="1">
    <location>
        <position position="154"/>
    </location>
</feature>
<feature type="active site" description="Acyl-ester intermediate" evidence="1">
    <location>
        <position position="178"/>
    </location>
</feature>
<organism>
    <name type="scientific">Synechococcus sp. (strain CC9902)</name>
    <dbReference type="NCBI Taxonomy" id="316279"/>
    <lineage>
        <taxon>Bacteria</taxon>
        <taxon>Bacillati</taxon>
        <taxon>Cyanobacteriota</taxon>
        <taxon>Cyanophyceae</taxon>
        <taxon>Synechococcales</taxon>
        <taxon>Synechococcaceae</taxon>
        <taxon>Synechococcus</taxon>
    </lineage>
</organism>
<reference key="1">
    <citation type="submission" date="2005-08" db="EMBL/GenBank/DDBJ databases">
        <title>Complete sequence of Synechococcus sp. CC9902.</title>
        <authorList>
            <person name="Copeland A."/>
            <person name="Lucas S."/>
            <person name="Lapidus A."/>
            <person name="Barry K."/>
            <person name="Detter J.C."/>
            <person name="Glavina T."/>
            <person name="Hammon N."/>
            <person name="Israni S."/>
            <person name="Pitluck S."/>
            <person name="Martinez M."/>
            <person name="Schmutz J."/>
            <person name="Larimer F."/>
            <person name="Land M."/>
            <person name="Kyrpides N."/>
            <person name="Ivanova N."/>
            <person name="Richardson P."/>
        </authorList>
    </citation>
    <scope>NUCLEOTIDE SEQUENCE [LARGE SCALE GENOMIC DNA]</scope>
    <source>
        <strain>CC9902</strain>
    </source>
</reference>
<sequence>MDRKTMTISAWRQQLQNGDISSRELVDQHIERLETAEPSLSVYNEITVERARADADRIDAARAAGESLGPLAGLPLAIKDNLCTRGVRTTCSSRMLEHFVPPYESTATERLWQAGGVLVGKTNLDEFAMGGSTETSAFGATHNPWNLDHVPGGSSGGSAAAVASGSCIASLGSDTGGSIRQPASFCGVVGLKPTYGRVSRWGLVAFASSLDQVGPFATSVADAAELLQVIAGPDPRDSTCLNVEVPDYSAGLNQSIKGLKVGVIKECFDAKGLDGEVNASVRAAAAQLEALGAELVEVSCPRFNDGIATYYVIAPSEASANLARYDGVKYGFRAADAESLATMTSSSRAEGFGEEVQRRILIGTYALSAGYVDAYYKKAQQVRTLIRRDFDAAFQSVDVLLTPTAPSPAFKAGAHKDDPLAMYLADLLTIPVNLAGLPAISVPCGFSQTGLPIGVQLIGNVLDEARLLQVAHQYEQAADVLSQRPKAPLVP</sequence>
<protein>
    <recommendedName>
        <fullName evidence="1">Glutamyl-tRNA(Gln) amidotransferase subunit A</fullName>
        <shortName evidence="1">Glu-ADT subunit A</shortName>
        <ecNumber evidence="1">6.3.5.7</ecNumber>
    </recommendedName>
</protein>
<gene>
    <name evidence="1" type="primary">gatA</name>
    <name type="ordered locus">Syncc9902_1302</name>
</gene>
<name>GATA_SYNS9</name>
<evidence type="ECO:0000255" key="1">
    <source>
        <dbReference type="HAMAP-Rule" id="MF_00120"/>
    </source>
</evidence>
<proteinExistence type="inferred from homology"/>
<comment type="function">
    <text evidence="1">Allows the formation of correctly charged Gln-tRNA(Gln) through the transamidation of misacylated Glu-tRNA(Gln) in organisms which lack glutaminyl-tRNA synthetase. The reaction takes place in the presence of glutamine and ATP through an activated gamma-phospho-Glu-tRNA(Gln).</text>
</comment>
<comment type="catalytic activity">
    <reaction evidence="1">
        <text>L-glutamyl-tRNA(Gln) + L-glutamine + ATP + H2O = L-glutaminyl-tRNA(Gln) + L-glutamate + ADP + phosphate + H(+)</text>
        <dbReference type="Rhea" id="RHEA:17521"/>
        <dbReference type="Rhea" id="RHEA-COMP:9681"/>
        <dbReference type="Rhea" id="RHEA-COMP:9684"/>
        <dbReference type="ChEBI" id="CHEBI:15377"/>
        <dbReference type="ChEBI" id="CHEBI:15378"/>
        <dbReference type="ChEBI" id="CHEBI:29985"/>
        <dbReference type="ChEBI" id="CHEBI:30616"/>
        <dbReference type="ChEBI" id="CHEBI:43474"/>
        <dbReference type="ChEBI" id="CHEBI:58359"/>
        <dbReference type="ChEBI" id="CHEBI:78520"/>
        <dbReference type="ChEBI" id="CHEBI:78521"/>
        <dbReference type="ChEBI" id="CHEBI:456216"/>
        <dbReference type="EC" id="6.3.5.7"/>
    </reaction>
</comment>
<comment type="subunit">
    <text evidence="1">Heterotrimer of A, B and C subunits.</text>
</comment>
<comment type="similarity">
    <text evidence="1">Belongs to the amidase family. GatA subfamily.</text>
</comment>